<name>GLMU_MYCGI</name>
<comment type="function">
    <text evidence="1">Catalyzes the last two sequential reactions in the de novo biosynthetic pathway for UDP-N-acetylglucosamine (UDP-GlcNAc). The C-terminal domain catalyzes the transfer of acetyl group from acetyl coenzyme A to glucosamine-1-phosphate (GlcN-1-P) to produce N-acetylglucosamine-1-phosphate (GlcNAc-1-P), which is converted into UDP-GlcNAc by the transfer of uridine 5-monophosphate (from uridine 5-triphosphate), a reaction catalyzed by the N-terminal domain.</text>
</comment>
<comment type="catalytic activity">
    <reaction evidence="1">
        <text>alpha-D-glucosamine 1-phosphate + acetyl-CoA = N-acetyl-alpha-D-glucosamine 1-phosphate + CoA + H(+)</text>
        <dbReference type="Rhea" id="RHEA:13725"/>
        <dbReference type="ChEBI" id="CHEBI:15378"/>
        <dbReference type="ChEBI" id="CHEBI:57287"/>
        <dbReference type="ChEBI" id="CHEBI:57288"/>
        <dbReference type="ChEBI" id="CHEBI:57776"/>
        <dbReference type="ChEBI" id="CHEBI:58516"/>
        <dbReference type="EC" id="2.3.1.157"/>
    </reaction>
</comment>
<comment type="catalytic activity">
    <reaction evidence="1">
        <text>N-acetyl-alpha-D-glucosamine 1-phosphate + UTP + H(+) = UDP-N-acetyl-alpha-D-glucosamine + diphosphate</text>
        <dbReference type="Rhea" id="RHEA:13509"/>
        <dbReference type="ChEBI" id="CHEBI:15378"/>
        <dbReference type="ChEBI" id="CHEBI:33019"/>
        <dbReference type="ChEBI" id="CHEBI:46398"/>
        <dbReference type="ChEBI" id="CHEBI:57705"/>
        <dbReference type="ChEBI" id="CHEBI:57776"/>
        <dbReference type="EC" id="2.7.7.23"/>
    </reaction>
</comment>
<comment type="cofactor">
    <cofactor evidence="1">
        <name>Mg(2+)</name>
        <dbReference type="ChEBI" id="CHEBI:18420"/>
    </cofactor>
    <text evidence="1">Binds 1 Mg(2+) ion per subunit.</text>
</comment>
<comment type="pathway">
    <text evidence="1">Nucleotide-sugar biosynthesis; UDP-N-acetyl-alpha-D-glucosamine biosynthesis; N-acetyl-alpha-D-glucosamine 1-phosphate from alpha-D-glucosamine 6-phosphate (route II): step 2/2.</text>
</comment>
<comment type="pathway">
    <text evidence="1">Nucleotide-sugar biosynthesis; UDP-N-acetyl-alpha-D-glucosamine biosynthesis; UDP-N-acetyl-alpha-D-glucosamine from N-acetyl-alpha-D-glucosamine 1-phosphate: step 1/1.</text>
</comment>
<comment type="pathway">
    <text evidence="1">Bacterial outer membrane biogenesis; LPS lipid A biosynthesis.</text>
</comment>
<comment type="subunit">
    <text evidence="1">Homotrimer.</text>
</comment>
<comment type="subcellular location">
    <subcellularLocation>
        <location evidence="1">Cytoplasm</location>
    </subcellularLocation>
</comment>
<comment type="similarity">
    <text evidence="1">In the N-terminal section; belongs to the N-acetylglucosamine-1-phosphate uridyltransferase family.</text>
</comment>
<comment type="similarity">
    <text evidence="1">In the C-terminal section; belongs to the transferase hexapeptide repeat family.</text>
</comment>
<dbReference type="EC" id="2.7.7.23" evidence="1"/>
<dbReference type="EC" id="2.3.1.157" evidence="1"/>
<dbReference type="EMBL" id="CP000656">
    <property type="protein sequence ID" value="ABP44424.1"/>
    <property type="molecule type" value="Genomic_DNA"/>
</dbReference>
<dbReference type="SMR" id="A4T6M7"/>
<dbReference type="STRING" id="350054.Mflv_1944"/>
<dbReference type="KEGG" id="mgi:Mflv_1944"/>
<dbReference type="eggNOG" id="COG1207">
    <property type="taxonomic scope" value="Bacteria"/>
</dbReference>
<dbReference type="HOGENOM" id="CLU_029499_15_2_11"/>
<dbReference type="OrthoDB" id="9775031at2"/>
<dbReference type="UniPathway" id="UPA00113">
    <property type="reaction ID" value="UER00532"/>
</dbReference>
<dbReference type="UniPathway" id="UPA00113">
    <property type="reaction ID" value="UER00533"/>
</dbReference>
<dbReference type="UniPathway" id="UPA00973"/>
<dbReference type="GO" id="GO:0005737">
    <property type="term" value="C:cytoplasm"/>
    <property type="evidence" value="ECO:0007669"/>
    <property type="project" value="UniProtKB-SubCell"/>
</dbReference>
<dbReference type="GO" id="GO:0016020">
    <property type="term" value="C:membrane"/>
    <property type="evidence" value="ECO:0007669"/>
    <property type="project" value="GOC"/>
</dbReference>
<dbReference type="GO" id="GO:0019134">
    <property type="term" value="F:glucosamine-1-phosphate N-acetyltransferase activity"/>
    <property type="evidence" value="ECO:0007669"/>
    <property type="project" value="UniProtKB-UniRule"/>
</dbReference>
<dbReference type="GO" id="GO:0000287">
    <property type="term" value="F:magnesium ion binding"/>
    <property type="evidence" value="ECO:0007669"/>
    <property type="project" value="UniProtKB-UniRule"/>
</dbReference>
<dbReference type="GO" id="GO:0003977">
    <property type="term" value="F:UDP-N-acetylglucosamine diphosphorylase activity"/>
    <property type="evidence" value="ECO:0007669"/>
    <property type="project" value="UniProtKB-UniRule"/>
</dbReference>
<dbReference type="GO" id="GO:0000902">
    <property type="term" value="P:cell morphogenesis"/>
    <property type="evidence" value="ECO:0007669"/>
    <property type="project" value="UniProtKB-UniRule"/>
</dbReference>
<dbReference type="GO" id="GO:0071555">
    <property type="term" value="P:cell wall organization"/>
    <property type="evidence" value="ECO:0007669"/>
    <property type="project" value="UniProtKB-KW"/>
</dbReference>
<dbReference type="GO" id="GO:0009245">
    <property type="term" value="P:lipid A biosynthetic process"/>
    <property type="evidence" value="ECO:0007669"/>
    <property type="project" value="UniProtKB-UniRule"/>
</dbReference>
<dbReference type="GO" id="GO:0009252">
    <property type="term" value="P:peptidoglycan biosynthetic process"/>
    <property type="evidence" value="ECO:0007669"/>
    <property type="project" value="UniProtKB-UniRule"/>
</dbReference>
<dbReference type="GO" id="GO:0008360">
    <property type="term" value="P:regulation of cell shape"/>
    <property type="evidence" value="ECO:0007669"/>
    <property type="project" value="UniProtKB-KW"/>
</dbReference>
<dbReference type="GO" id="GO:0006048">
    <property type="term" value="P:UDP-N-acetylglucosamine biosynthetic process"/>
    <property type="evidence" value="ECO:0007669"/>
    <property type="project" value="UniProtKB-UniPathway"/>
</dbReference>
<dbReference type="CDD" id="cd02540">
    <property type="entry name" value="GT2_GlmU_N_bac"/>
    <property type="match status" value="1"/>
</dbReference>
<dbReference type="CDD" id="cd03353">
    <property type="entry name" value="LbH_GlmU_C"/>
    <property type="match status" value="1"/>
</dbReference>
<dbReference type="Gene3D" id="2.160.10.10">
    <property type="entry name" value="Hexapeptide repeat proteins"/>
    <property type="match status" value="1"/>
</dbReference>
<dbReference type="Gene3D" id="3.90.550.10">
    <property type="entry name" value="Spore Coat Polysaccharide Biosynthesis Protein SpsA, Chain A"/>
    <property type="match status" value="1"/>
</dbReference>
<dbReference type="HAMAP" id="MF_01631">
    <property type="entry name" value="GlmU"/>
    <property type="match status" value="1"/>
</dbReference>
<dbReference type="InterPro" id="IPR005882">
    <property type="entry name" value="Bifunctional_GlmU"/>
</dbReference>
<dbReference type="InterPro" id="IPR050065">
    <property type="entry name" value="GlmU-like"/>
</dbReference>
<dbReference type="InterPro" id="IPR038009">
    <property type="entry name" value="GlmU_C_LbH"/>
</dbReference>
<dbReference type="InterPro" id="IPR001451">
    <property type="entry name" value="Hexapep"/>
</dbReference>
<dbReference type="InterPro" id="IPR005835">
    <property type="entry name" value="NTP_transferase_dom"/>
</dbReference>
<dbReference type="InterPro" id="IPR029044">
    <property type="entry name" value="Nucleotide-diphossugar_trans"/>
</dbReference>
<dbReference type="InterPro" id="IPR011004">
    <property type="entry name" value="Trimer_LpxA-like_sf"/>
</dbReference>
<dbReference type="NCBIfam" id="TIGR01173">
    <property type="entry name" value="glmU"/>
    <property type="match status" value="1"/>
</dbReference>
<dbReference type="NCBIfam" id="NF010932">
    <property type="entry name" value="PRK14352.1"/>
    <property type="match status" value="1"/>
</dbReference>
<dbReference type="PANTHER" id="PTHR43584:SF3">
    <property type="entry name" value="BIFUNCTIONAL PROTEIN GLMU"/>
    <property type="match status" value="1"/>
</dbReference>
<dbReference type="PANTHER" id="PTHR43584">
    <property type="entry name" value="NUCLEOTIDYL TRANSFERASE"/>
    <property type="match status" value="1"/>
</dbReference>
<dbReference type="Pfam" id="PF00132">
    <property type="entry name" value="Hexapep"/>
    <property type="match status" value="1"/>
</dbReference>
<dbReference type="Pfam" id="PF00483">
    <property type="entry name" value="NTP_transferase"/>
    <property type="match status" value="1"/>
</dbReference>
<dbReference type="SUPFAM" id="SSF53448">
    <property type="entry name" value="Nucleotide-diphospho-sugar transferases"/>
    <property type="match status" value="1"/>
</dbReference>
<dbReference type="SUPFAM" id="SSF51161">
    <property type="entry name" value="Trimeric LpxA-like enzymes"/>
    <property type="match status" value="1"/>
</dbReference>
<protein>
    <recommendedName>
        <fullName evidence="1">Bifunctional protein GlmU</fullName>
    </recommendedName>
    <domain>
        <recommendedName>
            <fullName evidence="1">UDP-N-acetylglucosamine pyrophosphorylase</fullName>
            <ecNumber evidence="1">2.7.7.23</ecNumber>
        </recommendedName>
        <alternativeName>
            <fullName evidence="1">N-acetylglucosamine-1-phosphate uridyltransferase</fullName>
        </alternativeName>
    </domain>
    <domain>
        <recommendedName>
            <fullName evidence="1">Glucosamine-1-phosphate N-acetyltransferase</fullName>
            <ecNumber evidence="1">2.3.1.157</ecNumber>
        </recommendedName>
    </domain>
</protein>
<gene>
    <name evidence="1" type="primary">glmU</name>
    <name type="ordered locus">Mflv_1944</name>
</gene>
<accession>A4T6M7</accession>
<feature type="chain" id="PRO_0000337731" description="Bifunctional protein GlmU">
    <location>
        <begin position="1"/>
        <end position="498"/>
    </location>
</feature>
<feature type="region of interest" description="Pyrophosphorylase" evidence="1">
    <location>
        <begin position="1"/>
        <end position="238"/>
    </location>
</feature>
<feature type="region of interest" description="Linker" evidence="1">
    <location>
        <begin position="239"/>
        <end position="259"/>
    </location>
</feature>
<feature type="region of interest" description="N-acetyltransferase" evidence="1">
    <location>
        <begin position="260"/>
        <end position="498"/>
    </location>
</feature>
<feature type="region of interest" description="Disordered" evidence="2">
    <location>
        <begin position="470"/>
        <end position="498"/>
    </location>
</feature>
<feature type="active site" description="Proton acceptor" evidence="1">
    <location>
        <position position="371"/>
    </location>
</feature>
<feature type="binding site" evidence="1">
    <location>
        <begin position="9"/>
        <end position="12"/>
    </location>
    <ligand>
        <name>UDP-N-acetyl-alpha-D-glucosamine</name>
        <dbReference type="ChEBI" id="CHEBI:57705"/>
    </ligand>
</feature>
<feature type="binding site" evidence="1">
    <location>
        <position position="23"/>
    </location>
    <ligand>
        <name>UDP-N-acetyl-alpha-D-glucosamine</name>
        <dbReference type="ChEBI" id="CHEBI:57705"/>
    </ligand>
</feature>
<feature type="binding site" evidence="1">
    <location>
        <position position="80"/>
    </location>
    <ligand>
        <name>UDP-N-acetyl-alpha-D-glucosamine</name>
        <dbReference type="ChEBI" id="CHEBI:57705"/>
    </ligand>
</feature>
<feature type="binding site" evidence="1">
    <location>
        <begin position="85"/>
        <end position="86"/>
    </location>
    <ligand>
        <name>UDP-N-acetyl-alpha-D-glucosamine</name>
        <dbReference type="ChEBI" id="CHEBI:57705"/>
    </ligand>
</feature>
<feature type="binding site" evidence="1">
    <location>
        <position position="111"/>
    </location>
    <ligand>
        <name>Mg(2+)</name>
        <dbReference type="ChEBI" id="CHEBI:18420"/>
    </ligand>
</feature>
<feature type="binding site" evidence="1">
    <location>
        <position position="148"/>
    </location>
    <ligand>
        <name>UDP-N-acetyl-alpha-D-glucosamine</name>
        <dbReference type="ChEBI" id="CHEBI:57705"/>
    </ligand>
</feature>
<feature type="binding site" evidence="1">
    <location>
        <position position="163"/>
    </location>
    <ligand>
        <name>UDP-N-acetyl-alpha-D-glucosamine</name>
        <dbReference type="ChEBI" id="CHEBI:57705"/>
    </ligand>
</feature>
<feature type="binding site" evidence="1">
    <location>
        <position position="178"/>
    </location>
    <ligand>
        <name>UDP-N-acetyl-alpha-D-glucosamine</name>
        <dbReference type="ChEBI" id="CHEBI:57705"/>
    </ligand>
</feature>
<feature type="binding site" evidence="1">
    <location>
        <position position="236"/>
    </location>
    <ligand>
        <name>Mg(2+)</name>
        <dbReference type="ChEBI" id="CHEBI:18420"/>
    </ligand>
</feature>
<feature type="binding site" evidence="1">
    <location>
        <position position="236"/>
    </location>
    <ligand>
        <name>UDP-N-acetyl-alpha-D-glucosamine</name>
        <dbReference type="ChEBI" id="CHEBI:57705"/>
    </ligand>
</feature>
<feature type="binding site" evidence="1">
    <location>
        <position position="341"/>
    </location>
    <ligand>
        <name>UDP-N-acetyl-alpha-D-glucosamine</name>
        <dbReference type="ChEBI" id="CHEBI:57705"/>
    </ligand>
</feature>
<feature type="binding site" evidence="1">
    <location>
        <position position="359"/>
    </location>
    <ligand>
        <name>UDP-N-acetyl-alpha-D-glucosamine</name>
        <dbReference type="ChEBI" id="CHEBI:57705"/>
    </ligand>
</feature>
<feature type="binding site" evidence="1">
    <location>
        <position position="374"/>
    </location>
    <ligand>
        <name>UDP-N-acetyl-alpha-D-glucosamine</name>
        <dbReference type="ChEBI" id="CHEBI:57705"/>
    </ligand>
</feature>
<feature type="binding site" evidence="1">
    <location>
        <position position="385"/>
    </location>
    <ligand>
        <name>UDP-N-acetyl-alpha-D-glucosamine</name>
        <dbReference type="ChEBI" id="CHEBI:57705"/>
    </ligand>
</feature>
<feature type="binding site" evidence="1">
    <location>
        <position position="388"/>
    </location>
    <ligand>
        <name>acetyl-CoA</name>
        <dbReference type="ChEBI" id="CHEBI:57288"/>
    </ligand>
</feature>
<feature type="binding site" evidence="1">
    <location>
        <begin position="394"/>
        <end position="395"/>
    </location>
    <ligand>
        <name>acetyl-CoA</name>
        <dbReference type="ChEBI" id="CHEBI:57288"/>
    </ligand>
</feature>
<feature type="binding site" evidence="1">
    <location>
        <position position="413"/>
    </location>
    <ligand>
        <name>acetyl-CoA</name>
        <dbReference type="ChEBI" id="CHEBI:57288"/>
    </ligand>
</feature>
<feature type="binding site" evidence="1">
    <location>
        <position position="431"/>
    </location>
    <ligand>
        <name>acetyl-CoA</name>
        <dbReference type="ChEBI" id="CHEBI:57288"/>
    </ligand>
</feature>
<proteinExistence type="inferred from homology"/>
<keyword id="KW-0012">Acyltransferase</keyword>
<keyword id="KW-0133">Cell shape</keyword>
<keyword id="KW-0961">Cell wall biogenesis/degradation</keyword>
<keyword id="KW-0963">Cytoplasm</keyword>
<keyword id="KW-0460">Magnesium</keyword>
<keyword id="KW-0479">Metal-binding</keyword>
<keyword id="KW-0511">Multifunctional enzyme</keyword>
<keyword id="KW-0548">Nucleotidyltransferase</keyword>
<keyword id="KW-0573">Peptidoglycan synthesis</keyword>
<keyword id="KW-0677">Repeat</keyword>
<keyword id="KW-0808">Transferase</keyword>
<evidence type="ECO:0000255" key="1">
    <source>
        <dbReference type="HAMAP-Rule" id="MF_01631"/>
    </source>
</evidence>
<evidence type="ECO:0000256" key="2">
    <source>
        <dbReference type="SAM" id="MobiDB-lite"/>
    </source>
</evidence>
<organism>
    <name type="scientific">Mycolicibacterium gilvum (strain PYR-GCK)</name>
    <name type="common">Mycobacterium gilvum (strain PYR-GCK)</name>
    <dbReference type="NCBI Taxonomy" id="350054"/>
    <lineage>
        <taxon>Bacteria</taxon>
        <taxon>Bacillati</taxon>
        <taxon>Actinomycetota</taxon>
        <taxon>Actinomycetes</taxon>
        <taxon>Mycobacteriales</taxon>
        <taxon>Mycobacteriaceae</taxon>
        <taxon>Mycolicibacterium</taxon>
    </lineage>
</organism>
<sequence length="498" mass="50630">MSDAAVVILAAGAGTRMKSDTPKVLHSLAGRSMLAHSMHAVAGLGPRHLVVVVGKHREQVAPAALQIGEHLGRTVDIAVQEEQRGTGHAVECGLAALPADFHGVVVVTAGDVPLLDTDTLAQLIATHDAESADVTLLTTTMADPTGYGRILRTQDGEVIGIVEQADATESQRAITEVNAAVYAFGVGALRSALSRLKTDNAQGELYLTDAIALVRGDGGTVRAVHVDDPALVAGVNDRVQLADLGAELNRRVVAAHQRAGVTIVDPATTWIDVDVTIGRDTVVRPGTQLLGATAVGGRCEIGPDTTLTDVTVGDGAQVIRTHGTSSQIGAGAVVGPFTYLRPGTALGADGKLGAFVETKNATIGTGTKVPHLTYVGDADIGEHSNIGASSVFVNYDGETKSRTTIGSHVRTGSDTMFVAPVTVGDGAYTGAGTVIRDDVPPGALAVSAGPQRNIEGWVARKRPGSKAAAAAEAAAADGDTAAADRAAATAKPAPATGE</sequence>
<reference key="1">
    <citation type="submission" date="2007-04" db="EMBL/GenBank/DDBJ databases">
        <title>Complete sequence of chromosome of Mycobacterium gilvum PYR-GCK.</title>
        <authorList>
            <consortium name="US DOE Joint Genome Institute"/>
            <person name="Copeland A."/>
            <person name="Lucas S."/>
            <person name="Lapidus A."/>
            <person name="Barry K."/>
            <person name="Detter J.C."/>
            <person name="Glavina del Rio T."/>
            <person name="Hammon N."/>
            <person name="Israni S."/>
            <person name="Dalin E."/>
            <person name="Tice H."/>
            <person name="Pitluck S."/>
            <person name="Chain P."/>
            <person name="Malfatti S."/>
            <person name="Shin M."/>
            <person name="Vergez L."/>
            <person name="Schmutz J."/>
            <person name="Larimer F."/>
            <person name="Land M."/>
            <person name="Hauser L."/>
            <person name="Kyrpides N."/>
            <person name="Mikhailova N."/>
            <person name="Miller C."/>
            <person name="Richardson P."/>
        </authorList>
    </citation>
    <scope>NUCLEOTIDE SEQUENCE [LARGE SCALE GENOMIC DNA]</scope>
    <source>
        <strain>PYR-GCK</strain>
    </source>
</reference>